<comment type="function">
    <text evidence="1">Acts as a chaperone.</text>
</comment>
<comment type="induction">
    <text evidence="1">By stress conditions e.g. heat shock (By similarity).</text>
</comment>
<comment type="similarity">
    <text evidence="3">Belongs to the heat shock protein 70 family.</text>
</comment>
<dbReference type="EMBL" id="BA000030">
    <property type="protein sequence ID" value="BAC72196.1"/>
    <property type="molecule type" value="Genomic_DNA"/>
</dbReference>
<dbReference type="SMR" id="Q82EX9"/>
<dbReference type="GeneID" id="41541563"/>
<dbReference type="KEGG" id="sma:SAVERM_4484"/>
<dbReference type="eggNOG" id="COG0443">
    <property type="taxonomic scope" value="Bacteria"/>
</dbReference>
<dbReference type="HOGENOM" id="CLU_005965_2_4_11"/>
<dbReference type="OrthoDB" id="9766019at2"/>
<dbReference type="Proteomes" id="UP000000428">
    <property type="component" value="Chromosome"/>
</dbReference>
<dbReference type="GO" id="GO:0005524">
    <property type="term" value="F:ATP binding"/>
    <property type="evidence" value="ECO:0007669"/>
    <property type="project" value="UniProtKB-UniRule"/>
</dbReference>
<dbReference type="GO" id="GO:0140662">
    <property type="term" value="F:ATP-dependent protein folding chaperone"/>
    <property type="evidence" value="ECO:0007669"/>
    <property type="project" value="InterPro"/>
</dbReference>
<dbReference type="GO" id="GO:0051082">
    <property type="term" value="F:unfolded protein binding"/>
    <property type="evidence" value="ECO:0007669"/>
    <property type="project" value="InterPro"/>
</dbReference>
<dbReference type="CDD" id="cd10234">
    <property type="entry name" value="ASKHA_NBD_HSP70_DnaK-like"/>
    <property type="match status" value="1"/>
</dbReference>
<dbReference type="FunFam" id="2.60.34.10:FF:000014">
    <property type="entry name" value="Chaperone protein DnaK HSP70"/>
    <property type="match status" value="1"/>
</dbReference>
<dbReference type="FunFam" id="1.20.1270.10:FF:000001">
    <property type="entry name" value="Molecular chaperone DnaK"/>
    <property type="match status" value="1"/>
</dbReference>
<dbReference type="FunFam" id="3.30.420.40:FF:000071">
    <property type="entry name" value="Molecular chaperone DnaK"/>
    <property type="match status" value="1"/>
</dbReference>
<dbReference type="FunFam" id="3.90.640.10:FF:000003">
    <property type="entry name" value="Molecular chaperone DnaK"/>
    <property type="match status" value="1"/>
</dbReference>
<dbReference type="Gene3D" id="1.20.1270.10">
    <property type="match status" value="1"/>
</dbReference>
<dbReference type="Gene3D" id="3.30.30.30">
    <property type="match status" value="1"/>
</dbReference>
<dbReference type="Gene3D" id="3.30.420.40">
    <property type="match status" value="3"/>
</dbReference>
<dbReference type="Gene3D" id="3.90.640.10">
    <property type="entry name" value="Actin, Chain A, domain 4"/>
    <property type="match status" value="1"/>
</dbReference>
<dbReference type="Gene3D" id="2.60.34.10">
    <property type="entry name" value="Substrate Binding Domain Of DNAk, Chain A, domain 1"/>
    <property type="match status" value="1"/>
</dbReference>
<dbReference type="HAMAP" id="MF_00332">
    <property type="entry name" value="DnaK"/>
    <property type="match status" value="1"/>
</dbReference>
<dbReference type="InterPro" id="IPR043129">
    <property type="entry name" value="ATPase_NBD"/>
</dbReference>
<dbReference type="InterPro" id="IPR012725">
    <property type="entry name" value="Chaperone_DnaK"/>
</dbReference>
<dbReference type="InterPro" id="IPR018181">
    <property type="entry name" value="Heat_shock_70_CS"/>
</dbReference>
<dbReference type="InterPro" id="IPR029048">
    <property type="entry name" value="HSP70_C_sf"/>
</dbReference>
<dbReference type="InterPro" id="IPR029047">
    <property type="entry name" value="HSP70_peptide-bd_sf"/>
</dbReference>
<dbReference type="InterPro" id="IPR013126">
    <property type="entry name" value="Hsp_70_fam"/>
</dbReference>
<dbReference type="NCBIfam" id="NF001413">
    <property type="entry name" value="PRK00290.1"/>
    <property type="match status" value="1"/>
</dbReference>
<dbReference type="NCBIfam" id="TIGR02350">
    <property type="entry name" value="prok_dnaK"/>
    <property type="match status" value="1"/>
</dbReference>
<dbReference type="PANTHER" id="PTHR19375">
    <property type="entry name" value="HEAT SHOCK PROTEIN 70KDA"/>
    <property type="match status" value="1"/>
</dbReference>
<dbReference type="Pfam" id="PF00012">
    <property type="entry name" value="HSP70"/>
    <property type="match status" value="1"/>
</dbReference>
<dbReference type="PRINTS" id="PR00301">
    <property type="entry name" value="HEATSHOCK70"/>
</dbReference>
<dbReference type="SUPFAM" id="SSF53067">
    <property type="entry name" value="Actin-like ATPase domain"/>
    <property type="match status" value="2"/>
</dbReference>
<dbReference type="SUPFAM" id="SSF100934">
    <property type="entry name" value="Heat shock protein 70kD (HSP70), C-terminal subdomain"/>
    <property type="match status" value="1"/>
</dbReference>
<dbReference type="SUPFAM" id="SSF100920">
    <property type="entry name" value="Heat shock protein 70kD (HSP70), peptide-binding domain"/>
    <property type="match status" value="1"/>
</dbReference>
<dbReference type="PROSITE" id="PS00297">
    <property type="entry name" value="HSP70_1"/>
    <property type="match status" value="1"/>
</dbReference>
<dbReference type="PROSITE" id="PS00329">
    <property type="entry name" value="HSP70_2"/>
    <property type="match status" value="1"/>
</dbReference>
<dbReference type="PROSITE" id="PS01036">
    <property type="entry name" value="HSP70_3"/>
    <property type="match status" value="1"/>
</dbReference>
<proteinExistence type="inferred from homology"/>
<evidence type="ECO:0000250" key="1"/>
<evidence type="ECO:0000256" key="2">
    <source>
        <dbReference type="SAM" id="MobiDB-lite"/>
    </source>
</evidence>
<evidence type="ECO:0000305" key="3"/>
<organism>
    <name type="scientific">Streptomyces avermitilis (strain ATCC 31267 / DSM 46492 / JCM 5070 / NBRC 14893 / NCIMB 12804 / NRRL 8165 / MA-4680)</name>
    <dbReference type="NCBI Taxonomy" id="227882"/>
    <lineage>
        <taxon>Bacteria</taxon>
        <taxon>Bacillati</taxon>
        <taxon>Actinomycetota</taxon>
        <taxon>Actinomycetes</taxon>
        <taxon>Kitasatosporales</taxon>
        <taxon>Streptomycetaceae</taxon>
        <taxon>Streptomyces</taxon>
    </lineage>
</organism>
<name>DNAK1_STRAW</name>
<accession>Q82EX9</accession>
<keyword id="KW-0067">ATP-binding</keyword>
<keyword id="KW-0143">Chaperone</keyword>
<keyword id="KW-0547">Nucleotide-binding</keyword>
<keyword id="KW-0597">Phosphoprotein</keyword>
<keyword id="KW-1185">Reference proteome</keyword>
<keyword id="KW-0346">Stress response</keyword>
<sequence>MARAVGIDLGTTNSVVSVLEGGEPTVITNAEGARTTPSVVAFAKNGEVLVGEVAKRQAVTNVDRTVRSVKRHMGTDWKINLDGKDFNPQQMSAFILQKLKRDAEAYLGEKVTDAVITVPAYFNDSERQATKEAGEIAGLNVLRIVNEPTAAALAYGLDKDDQTILVFDLGGGTFDVSLLEIGDGVVEVKATNGDNHLGGDDWDQRVVDYLVQQFKAGHGVDLAKDKMALQRLREAAEKAKIELSSSTETSINLPYITASAEGPLHLDEKLTRAQFQQLTADLLERCKTPFHNVIKDAGINLSEIDHVVLVGGSTRMPAVAELVKELTGGQDANKGVNPDEVVAIGAALQAGVLKGEVKDVLLLDVTPLSLGIETKGGIMTKLIERNTTIPTKRSEIFTTAEDNQPSVQIQVYQGEREIAAYNKKLGMFELTGLPPAPRGVPQIEVAFDIDANGIMHVTAKDLGTGKEQKMTVTGGSSLPKDEVDRMRQEAEQYADEDHRRREAAETRNQGEQLVYQTEKFLKDNEDKVPGEVKTEVEASIEELKAALKGESAEGDNTAEIRTATEKVAAVSQKLGQAMYADAQAAQAAGGAEGAAGGEHAKAADDDVVDAEIVDEDRKDGAA</sequence>
<gene>
    <name type="primary">dnaK1</name>
    <name type="ordered locus">SAV_4484</name>
</gene>
<feature type="chain" id="PRO_0000078548" description="Chaperone protein dnaK1">
    <location>
        <begin position="1"/>
        <end position="622"/>
    </location>
</feature>
<feature type="region of interest" description="Disordered" evidence="2">
    <location>
        <begin position="465"/>
        <end position="484"/>
    </location>
</feature>
<feature type="region of interest" description="Disordered" evidence="2">
    <location>
        <begin position="491"/>
        <end position="511"/>
    </location>
</feature>
<feature type="region of interest" description="Disordered" evidence="2">
    <location>
        <begin position="589"/>
        <end position="622"/>
    </location>
</feature>
<feature type="compositionally biased region" description="Basic and acidic residues" evidence="2">
    <location>
        <begin position="491"/>
        <end position="505"/>
    </location>
</feature>
<feature type="compositionally biased region" description="Acidic residues" evidence="2">
    <location>
        <begin position="605"/>
        <end position="614"/>
    </location>
</feature>
<feature type="modified residue" description="Phosphothreonine; by autocatalysis" evidence="1">
    <location>
        <position position="173"/>
    </location>
</feature>
<protein>
    <recommendedName>
        <fullName>Chaperone protein dnaK1</fullName>
    </recommendedName>
    <alternativeName>
        <fullName>HSP70-1</fullName>
    </alternativeName>
    <alternativeName>
        <fullName>Heat shock 70 kDa protein 1</fullName>
    </alternativeName>
    <alternativeName>
        <fullName>Heat shock protein 70-1</fullName>
    </alternativeName>
</protein>
<reference key="1">
    <citation type="journal article" date="2001" name="Proc. Natl. Acad. Sci. U.S.A.">
        <title>Genome sequence of an industrial microorganism Streptomyces avermitilis: deducing the ability of producing secondary metabolites.</title>
        <authorList>
            <person name="Omura S."/>
            <person name="Ikeda H."/>
            <person name="Ishikawa J."/>
            <person name="Hanamoto A."/>
            <person name="Takahashi C."/>
            <person name="Shinose M."/>
            <person name="Takahashi Y."/>
            <person name="Horikawa H."/>
            <person name="Nakazawa H."/>
            <person name="Osonoe T."/>
            <person name="Kikuchi H."/>
            <person name="Shiba T."/>
            <person name="Sakaki Y."/>
            <person name="Hattori M."/>
        </authorList>
    </citation>
    <scope>NUCLEOTIDE SEQUENCE [LARGE SCALE GENOMIC DNA]</scope>
    <source>
        <strain>ATCC 31267 / DSM 46492 / JCM 5070 / NBRC 14893 / NCIMB 12804 / NRRL 8165 / MA-4680</strain>
    </source>
</reference>
<reference key="2">
    <citation type="journal article" date="2003" name="Nat. Biotechnol.">
        <title>Complete genome sequence and comparative analysis of the industrial microorganism Streptomyces avermitilis.</title>
        <authorList>
            <person name="Ikeda H."/>
            <person name="Ishikawa J."/>
            <person name="Hanamoto A."/>
            <person name="Shinose M."/>
            <person name="Kikuchi H."/>
            <person name="Shiba T."/>
            <person name="Sakaki Y."/>
            <person name="Hattori M."/>
            <person name="Omura S."/>
        </authorList>
    </citation>
    <scope>NUCLEOTIDE SEQUENCE [LARGE SCALE GENOMIC DNA]</scope>
    <source>
        <strain>ATCC 31267 / DSM 46492 / JCM 5070 / NBRC 14893 / NCIMB 12804 / NRRL 8165 / MA-4680</strain>
    </source>
</reference>